<sequence length="365" mass="39193">MASKTENSEKQKALNSVLNQIEKSFGKGSIVRLGDSARMKVETISSGALTLDLALGGGLPRGRVIEIYGPESSGKTTLALHAIAEIQKTGGIAAFVDAEHALDPTYAAALGVDIENLLVSQPDTGEMALEIVDQLVRSVAVDIVVVDSVAALVPRAEIEGDMGDSHMGLQARLMSQALRKITGNIGKSGCTVIFLNQLRQKIGIVYGNPETTTGGNALKFYASVRLDIRRTQTLKKGSDEYGIRAKVKVAKNKVAPPFRIAEFDIIFGQGISTIGCLIDLAEETGVIKRKGAWYSYNNENIGQGRDRTITYMQENPAFTEEIDKRVRAALAGGAVVSATSVVKLDDNPDTDDHDVEDIDENTDEE</sequence>
<keyword id="KW-0067">ATP-binding</keyword>
<keyword id="KW-0963">Cytoplasm</keyword>
<keyword id="KW-0227">DNA damage</keyword>
<keyword id="KW-0233">DNA recombination</keyword>
<keyword id="KW-0234">DNA repair</keyword>
<keyword id="KW-0238">DNA-binding</keyword>
<keyword id="KW-0547">Nucleotide-binding</keyword>
<keyword id="KW-0742">SOS response</keyword>
<gene>
    <name evidence="1" type="primary">recA</name>
</gene>
<feature type="chain" id="PRO_0000122837" description="Protein RecA">
    <location>
        <begin position="1"/>
        <end position="365"/>
    </location>
</feature>
<feature type="region of interest" description="Disordered" evidence="2">
    <location>
        <begin position="344"/>
        <end position="365"/>
    </location>
</feature>
<feature type="compositionally biased region" description="Acidic residues" evidence="2">
    <location>
        <begin position="347"/>
        <end position="365"/>
    </location>
</feature>
<feature type="binding site" evidence="1">
    <location>
        <begin position="69"/>
        <end position="76"/>
    </location>
    <ligand>
        <name>ATP</name>
        <dbReference type="ChEBI" id="CHEBI:30616"/>
    </ligand>
</feature>
<evidence type="ECO:0000255" key="1">
    <source>
        <dbReference type="HAMAP-Rule" id="MF_00268"/>
    </source>
</evidence>
<evidence type="ECO:0000256" key="2">
    <source>
        <dbReference type="SAM" id="MobiDB-lite"/>
    </source>
</evidence>
<accession>P48293</accession>
<proteinExistence type="inferred from homology"/>
<comment type="function">
    <text evidence="1">Can catalyze the hydrolysis of ATP in the presence of single-stranded DNA, the ATP-dependent uptake of single-stranded DNA by duplex DNA, and the ATP-dependent hybridization of homologous single-stranded DNAs. It interacts with LexA causing its activation and leading to its autocatalytic cleavage.</text>
</comment>
<comment type="subcellular location">
    <subcellularLocation>
        <location evidence="1">Cytoplasm</location>
    </subcellularLocation>
</comment>
<comment type="similarity">
    <text evidence="1">Belongs to the RecA family.</text>
</comment>
<dbReference type="EMBL" id="U33924">
    <property type="protein sequence ID" value="AAA75282.1"/>
    <property type="molecule type" value="Genomic_DNA"/>
</dbReference>
<dbReference type="RefSeq" id="WP_014275106.1">
    <property type="nucleotide sequence ID" value="NZ_JBEVAD010000112.1"/>
</dbReference>
<dbReference type="SMR" id="P48293"/>
<dbReference type="OMA" id="DSKMGLH"/>
<dbReference type="GO" id="GO:0005829">
    <property type="term" value="C:cytosol"/>
    <property type="evidence" value="ECO:0007669"/>
    <property type="project" value="TreeGrafter"/>
</dbReference>
<dbReference type="GO" id="GO:0005524">
    <property type="term" value="F:ATP binding"/>
    <property type="evidence" value="ECO:0007669"/>
    <property type="project" value="UniProtKB-UniRule"/>
</dbReference>
<dbReference type="GO" id="GO:0016887">
    <property type="term" value="F:ATP hydrolysis activity"/>
    <property type="evidence" value="ECO:0007669"/>
    <property type="project" value="InterPro"/>
</dbReference>
<dbReference type="GO" id="GO:0140664">
    <property type="term" value="F:ATP-dependent DNA damage sensor activity"/>
    <property type="evidence" value="ECO:0007669"/>
    <property type="project" value="InterPro"/>
</dbReference>
<dbReference type="GO" id="GO:0003684">
    <property type="term" value="F:damaged DNA binding"/>
    <property type="evidence" value="ECO:0007669"/>
    <property type="project" value="UniProtKB-UniRule"/>
</dbReference>
<dbReference type="GO" id="GO:0003697">
    <property type="term" value="F:single-stranded DNA binding"/>
    <property type="evidence" value="ECO:0007669"/>
    <property type="project" value="UniProtKB-UniRule"/>
</dbReference>
<dbReference type="GO" id="GO:0006310">
    <property type="term" value="P:DNA recombination"/>
    <property type="evidence" value="ECO:0007669"/>
    <property type="project" value="UniProtKB-UniRule"/>
</dbReference>
<dbReference type="GO" id="GO:0006281">
    <property type="term" value="P:DNA repair"/>
    <property type="evidence" value="ECO:0007669"/>
    <property type="project" value="UniProtKB-UniRule"/>
</dbReference>
<dbReference type="GO" id="GO:0009432">
    <property type="term" value="P:SOS response"/>
    <property type="evidence" value="ECO:0007669"/>
    <property type="project" value="UniProtKB-UniRule"/>
</dbReference>
<dbReference type="CDD" id="cd00983">
    <property type="entry name" value="RecA"/>
    <property type="match status" value="1"/>
</dbReference>
<dbReference type="FunFam" id="3.40.50.300:FF:000087">
    <property type="entry name" value="Recombinase RecA"/>
    <property type="match status" value="1"/>
</dbReference>
<dbReference type="Gene3D" id="3.40.50.300">
    <property type="entry name" value="P-loop containing nucleotide triphosphate hydrolases"/>
    <property type="match status" value="1"/>
</dbReference>
<dbReference type="HAMAP" id="MF_00268">
    <property type="entry name" value="RecA"/>
    <property type="match status" value="1"/>
</dbReference>
<dbReference type="InterPro" id="IPR003593">
    <property type="entry name" value="AAA+_ATPase"/>
</dbReference>
<dbReference type="InterPro" id="IPR013765">
    <property type="entry name" value="DNA_recomb/repair_RecA"/>
</dbReference>
<dbReference type="InterPro" id="IPR020584">
    <property type="entry name" value="DNA_recomb/repair_RecA_CS"/>
</dbReference>
<dbReference type="InterPro" id="IPR027417">
    <property type="entry name" value="P-loop_NTPase"/>
</dbReference>
<dbReference type="InterPro" id="IPR049261">
    <property type="entry name" value="RecA-like_C"/>
</dbReference>
<dbReference type="InterPro" id="IPR049428">
    <property type="entry name" value="RecA-like_N"/>
</dbReference>
<dbReference type="InterPro" id="IPR020588">
    <property type="entry name" value="RecA_ATP-bd"/>
</dbReference>
<dbReference type="InterPro" id="IPR023400">
    <property type="entry name" value="RecA_C_sf"/>
</dbReference>
<dbReference type="InterPro" id="IPR020587">
    <property type="entry name" value="RecA_monomer-monomer_interface"/>
</dbReference>
<dbReference type="NCBIfam" id="TIGR02012">
    <property type="entry name" value="tigrfam_recA"/>
    <property type="match status" value="1"/>
</dbReference>
<dbReference type="PANTHER" id="PTHR45900:SF1">
    <property type="entry name" value="MITOCHONDRIAL DNA REPAIR PROTEIN RECA HOMOLOG-RELATED"/>
    <property type="match status" value="1"/>
</dbReference>
<dbReference type="PANTHER" id="PTHR45900">
    <property type="entry name" value="RECA"/>
    <property type="match status" value="1"/>
</dbReference>
<dbReference type="Pfam" id="PF00154">
    <property type="entry name" value="RecA"/>
    <property type="match status" value="1"/>
</dbReference>
<dbReference type="Pfam" id="PF21096">
    <property type="entry name" value="RecA_C"/>
    <property type="match status" value="1"/>
</dbReference>
<dbReference type="PRINTS" id="PR00142">
    <property type="entry name" value="RECA"/>
</dbReference>
<dbReference type="SMART" id="SM00382">
    <property type="entry name" value="AAA"/>
    <property type="match status" value="1"/>
</dbReference>
<dbReference type="SUPFAM" id="SSF52540">
    <property type="entry name" value="P-loop containing nucleoside triphosphate hydrolases"/>
    <property type="match status" value="1"/>
</dbReference>
<dbReference type="SUPFAM" id="SSF54752">
    <property type="entry name" value="RecA protein, C-terminal domain"/>
    <property type="match status" value="1"/>
</dbReference>
<dbReference type="PROSITE" id="PS00321">
    <property type="entry name" value="RECA_1"/>
    <property type="match status" value="1"/>
</dbReference>
<dbReference type="PROSITE" id="PS50162">
    <property type="entry name" value="RECA_2"/>
    <property type="match status" value="1"/>
</dbReference>
<dbReference type="PROSITE" id="PS50163">
    <property type="entry name" value="RECA_3"/>
    <property type="match status" value="1"/>
</dbReference>
<name>RECA_ARTPT</name>
<protein>
    <recommendedName>
        <fullName evidence="1">Protein RecA</fullName>
    </recommendedName>
    <alternativeName>
        <fullName evidence="1">Recombinase A</fullName>
    </alternativeName>
</protein>
<organism>
    <name type="scientific">Arthrospira platensis</name>
    <name type="common">Spirulina platensis</name>
    <dbReference type="NCBI Taxonomy" id="118562"/>
    <lineage>
        <taxon>Bacteria</taxon>
        <taxon>Bacillati</taxon>
        <taxon>Cyanobacteriota</taxon>
        <taxon>Cyanophyceae</taxon>
        <taxon>Oscillatoriophycideae</taxon>
        <taxon>Oscillatoriales</taxon>
        <taxon>Microcoleaceae</taxon>
        <taxon>Arthrospira</taxon>
    </lineage>
</organism>
<reference key="1">
    <citation type="submission" date="1995-08" db="EMBL/GenBank/DDBJ databases">
        <authorList>
            <person name="Vachhani A.K."/>
            <person name="Vonshak A."/>
        </authorList>
    </citation>
    <scope>NUCLEOTIDE SEQUENCE [GENOMIC DNA]</scope>
    <source>
        <strain>IAM M-135</strain>
    </source>
</reference>